<proteinExistence type="inferred from homology"/>
<organism>
    <name type="scientific">Shewanella baltica (strain OS185)</name>
    <dbReference type="NCBI Taxonomy" id="402882"/>
    <lineage>
        <taxon>Bacteria</taxon>
        <taxon>Pseudomonadati</taxon>
        <taxon>Pseudomonadota</taxon>
        <taxon>Gammaproteobacteria</taxon>
        <taxon>Alteromonadales</taxon>
        <taxon>Shewanellaceae</taxon>
        <taxon>Shewanella</taxon>
    </lineage>
</organism>
<evidence type="ECO:0000255" key="1">
    <source>
        <dbReference type="HAMAP-Rule" id="MF_00632"/>
    </source>
</evidence>
<sequence>MPSMDIVSEVNEVELRNAVDNTKRELATRFDFRGKTADVEYKDHVVTLTAEDDFQCQQLVDILRMQLSKRNVDPSSMEVDEKAIHSGKTFSLKVKFKEGIETLIAKKLVKLIKDSKLKVQASIQGEKVRVTGKKRDDLQAVMALARESELGQPFQFDNFKD</sequence>
<keyword id="KW-0547">Nucleotide-binding</keyword>
<gene>
    <name type="ordered locus">Shew185_3601</name>
</gene>
<comment type="function">
    <text evidence="1">Nucleotide-binding protein.</text>
</comment>
<comment type="similarity">
    <text evidence="1">Belongs to the YajQ family.</text>
</comment>
<protein>
    <recommendedName>
        <fullName evidence="1">Nucleotide-binding protein Shew185_3601</fullName>
    </recommendedName>
</protein>
<name>Y3601_SHEB8</name>
<reference key="1">
    <citation type="submission" date="2007-07" db="EMBL/GenBank/DDBJ databases">
        <title>Complete sequence of chromosome of Shewanella baltica OS185.</title>
        <authorList>
            <consortium name="US DOE Joint Genome Institute"/>
            <person name="Copeland A."/>
            <person name="Lucas S."/>
            <person name="Lapidus A."/>
            <person name="Barry K."/>
            <person name="Glavina del Rio T."/>
            <person name="Dalin E."/>
            <person name="Tice H."/>
            <person name="Pitluck S."/>
            <person name="Sims D."/>
            <person name="Brettin T."/>
            <person name="Bruce D."/>
            <person name="Detter J.C."/>
            <person name="Han C."/>
            <person name="Schmutz J."/>
            <person name="Larimer F."/>
            <person name="Land M."/>
            <person name="Hauser L."/>
            <person name="Kyrpides N."/>
            <person name="Mikhailova N."/>
            <person name="Brettar I."/>
            <person name="Rodrigues J."/>
            <person name="Konstantinidis K."/>
            <person name="Tiedje J."/>
            <person name="Richardson P."/>
        </authorList>
    </citation>
    <scope>NUCLEOTIDE SEQUENCE [LARGE SCALE GENOMIC DNA]</scope>
    <source>
        <strain>OS185</strain>
    </source>
</reference>
<feature type="chain" id="PRO_1000051757" description="Nucleotide-binding protein Shew185_3601">
    <location>
        <begin position="1"/>
        <end position="161"/>
    </location>
</feature>
<dbReference type="EMBL" id="CP000753">
    <property type="protein sequence ID" value="ABS09726.1"/>
    <property type="molecule type" value="Genomic_DNA"/>
</dbReference>
<dbReference type="RefSeq" id="WP_006080274.1">
    <property type="nucleotide sequence ID" value="NC_009665.1"/>
</dbReference>
<dbReference type="SMR" id="A6WSD7"/>
<dbReference type="KEGG" id="sbm:Shew185_3601"/>
<dbReference type="HOGENOM" id="CLU_099839_1_0_6"/>
<dbReference type="GO" id="GO:0005829">
    <property type="term" value="C:cytosol"/>
    <property type="evidence" value="ECO:0007669"/>
    <property type="project" value="TreeGrafter"/>
</dbReference>
<dbReference type="GO" id="GO:0000166">
    <property type="term" value="F:nucleotide binding"/>
    <property type="evidence" value="ECO:0007669"/>
    <property type="project" value="TreeGrafter"/>
</dbReference>
<dbReference type="CDD" id="cd11740">
    <property type="entry name" value="YajQ_like"/>
    <property type="match status" value="1"/>
</dbReference>
<dbReference type="FunFam" id="3.30.70.860:FF:000001">
    <property type="entry name" value="UPF0234 protein YajQ"/>
    <property type="match status" value="1"/>
</dbReference>
<dbReference type="Gene3D" id="3.30.70.860">
    <property type="match status" value="1"/>
</dbReference>
<dbReference type="Gene3D" id="3.30.70.990">
    <property type="entry name" value="YajQ-like, domain 2"/>
    <property type="match status" value="1"/>
</dbReference>
<dbReference type="HAMAP" id="MF_00632">
    <property type="entry name" value="YajQ"/>
    <property type="match status" value="1"/>
</dbReference>
<dbReference type="InterPro" id="IPR007551">
    <property type="entry name" value="DUF520"/>
</dbReference>
<dbReference type="InterPro" id="IPR035571">
    <property type="entry name" value="UPF0234-like_C"/>
</dbReference>
<dbReference type="InterPro" id="IPR035570">
    <property type="entry name" value="UPF0234_N"/>
</dbReference>
<dbReference type="InterPro" id="IPR036183">
    <property type="entry name" value="YajQ-like_sf"/>
</dbReference>
<dbReference type="NCBIfam" id="NF003819">
    <property type="entry name" value="PRK05412.1"/>
    <property type="match status" value="1"/>
</dbReference>
<dbReference type="PANTHER" id="PTHR30476">
    <property type="entry name" value="UPF0234 PROTEIN YAJQ"/>
    <property type="match status" value="1"/>
</dbReference>
<dbReference type="PANTHER" id="PTHR30476:SF0">
    <property type="entry name" value="UPF0234 PROTEIN YAJQ"/>
    <property type="match status" value="1"/>
</dbReference>
<dbReference type="Pfam" id="PF04461">
    <property type="entry name" value="DUF520"/>
    <property type="match status" value="1"/>
</dbReference>
<dbReference type="SUPFAM" id="SSF89963">
    <property type="entry name" value="YajQ-like"/>
    <property type="match status" value="2"/>
</dbReference>
<accession>A6WSD7</accession>